<organism>
    <name type="scientific">Nicotiana tabacum</name>
    <name type="common">Common tobacco</name>
    <dbReference type="NCBI Taxonomy" id="4097"/>
    <lineage>
        <taxon>Eukaryota</taxon>
        <taxon>Viridiplantae</taxon>
        <taxon>Streptophyta</taxon>
        <taxon>Embryophyta</taxon>
        <taxon>Tracheophyta</taxon>
        <taxon>Spermatophyta</taxon>
        <taxon>Magnoliopsida</taxon>
        <taxon>eudicotyledons</taxon>
        <taxon>Gunneridae</taxon>
        <taxon>Pentapetalae</taxon>
        <taxon>asterids</taxon>
        <taxon>lamiids</taxon>
        <taxon>Solanales</taxon>
        <taxon>Solanaceae</taxon>
        <taxon>Nicotianoideae</taxon>
        <taxon>Nicotianeae</taxon>
        <taxon>Nicotiana</taxon>
    </lineage>
</organism>
<gene>
    <name evidence="7" type="primary">QPT2b</name>
    <name evidence="6" type="synonym">MC212</name>
    <name evidence="8" type="synonym">QAPRT</name>
    <name evidence="6" type="synonym">QPRT</name>
    <name type="ORF">LOC107820078</name>
</gene>
<comment type="function">
    <text evidence="5 10 11 12">Involved in the biosynthesis of pyridine alkaloid natural products, leading mainly to the production of anabasine, anatabine, nicotine and nornicotine, effective deterrents against herbivores with antiparasitic and pesticide properties (neurotoxins); nornicotine serves as the precursor in the synthesis of the carcinogen compound N'-nitrosonornicotine (NNN) (Probable) (PubMed:31276744). Involved in the catabolism of quinolinic acid (QA) (Probable).</text>
</comment>
<comment type="catalytic activity">
    <reaction evidence="10 11 12">
        <text>nicotinate beta-D-ribonucleotide + CO2 + diphosphate = quinolinate + 5-phospho-alpha-D-ribose 1-diphosphate + 2 H(+)</text>
        <dbReference type="Rhea" id="RHEA:12733"/>
        <dbReference type="ChEBI" id="CHEBI:15378"/>
        <dbReference type="ChEBI" id="CHEBI:16526"/>
        <dbReference type="ChEBI" id="CHEBI:29959"/>
        <dbReference type="ChEBI" id="CHEBI:33019"/>
        <dbReference type="ChEBI" id="CHEBI:57502"/>
        <dbReference type="ChEBI" id="CHEBI:58017"/>
        <dbReference type="EC" id="2.4.2.19"/>
    </reaction>
    <physiologicalReaction direction="right-to-left" evidence="10 11 12">
        <dbReference type="Rhea" id="RHEA:12735"/>
    </physiologicalReaction>
</comment>
<comment type="pathway">
    <text evidence="10 11 12">Alkaloid biosynthesis; nicotine biosynthesis.</text>
</comment>
<comment type="pathway">
    <text evidence="10 11 12">Cofactor biosynthesis; NAD(+) biosynthesis; nicotinate D-ribonucleotide from quinolinate: step 1/1.</text>
</comment>
<comment type="subcellular location">
    <subcellularLocation>
        <location evidence="2">Mitochondrion</location>
    </subcellularLocation>
</comment>
<comment type="tissue specificity">
    <text evidence="3 4">Expressed in roots and flowers.</text>
</comment>
<comment type="developmental stage">
    <text evidence="3">In flowers, expressed in anthers, upper region of style, stigma and pollen from dehisced anthers.</text>
</comment>
<comment type="induction">
    <text evidence="3">Triggered by wounding and jasmonic acid (MeJA).</text>
</comment>
<comment type="similarity">
    <text evidence="9">Belongs to the NadC/ModD family.</text>
</comment>
<keyword id="KW-0017">Alkaloid metabolism</keyword>
<keyword id="KW-0328">Glycosyltransferase</keyword>
<keyword id="KW-0496">Mitochondrion</keyword>
<keyword id="KW-0662">Pyridine nucleotide biosynthesis</keyword>
<keyword id="KW-1185">Reference proteome</keyword>
<keyword id="KW-0808">Transferase</keyword>
<keyword id="KW-0809">Transit peptide</keyword>
<evidence type="ECO:0000250" key="1">
    <source>
        <dbReference type="UniProtKB" id="P9WJJ7"/>
    </source>
</evidence>
<evidence type="ECO:0000255" key="2"/>
<evidence type="ECO:0000269" key="3">
    <source>
    </source>
</evidence>
<evidence type="ECO:0000269" key="4">
    <source>
    </source>
</evidence>
<evidence type="ECO:0000269" key="5">
    <source>
    </source>
</evidence>
<evidence type="ECO:0000303" key="6">
    <source>
    </source>
</evidence>
<evidence type="ECO:0000303" key="7">
    <source>
    </source>
</evidence>
<evidence type="ECO:0000303" key="8">
    <source ref="1"/>
</evidence>
<evidence type="ECO:0000305" key="9"/>
<evidence type="ECO:0000305" key="10">
    <source>
    </source>
</evidence>
<evidence type="ECO:0000305" key="11">
    <source>
    </source>
</evidence>
<evidence type="ECO:0000305" key="12">
    <source>
    </source>
</evidence>
<dbReference type="EC" id="2.4.2.19" evidence="10 11 12"/>
<dbReference type="EMBL" id="AB038494">
    <property type="protein sequence ID" value="BAA92153.1"/>
    <property type="molecule type" value="mRNA"/>
</dbReference>
<dbReference type="RefSeq" id="NP_001312987.1">
    <property type="nucleotide sequence ID" value="NM_001326058.1"/>
</dbReference>
<dbReference type="SMR" id="A0A1S4CL59"/>
<dbReference type="STRING" id="4097.A0A1S4CL59"/>
<dbReference type="PaxDb" id="4097-A0A1S4CL59"/>
<dbReference type="ProMEX" id="A0A1S4CL59"/>
<dbReference type="GeneID" id="107820078"/>
<dbReference type="KEGG" id="nta:107820078"/>
<dbReference type="OMA" id="LCGQPWF"/>
<dbReference type="OrthoDB" id="10067394at2759"/>
<dbReference type="UniPathway" id="UPA00107"/>
<dbReference type="UniPathway" id="UPA00253">
    <property type="reaction ID" value="UER00331"/>
</dbReference>
<dbReference type="Proteomes" id="UP000084051">
    <property type="component" value="Unplaced"/>
</dbReference>
<dbReference type="GO" id="GO:0005737">
    <property type="term" value="C:cytoplasm"/>
    <property type="evidence" value="ECO:0000318"/>
    <property type="project" value="GO_Central"/>
</dbReference>
<dbReference type="GO" id="GO:0005739">
    <property type="term" value="C:mitochondrion"/>
    <property type="evidence" value="ECO:0007669"/>
    <property type="project" value="UniProtKB-SubCell"/>
</dbReference>
<dbReference type="GO" id="GO:0004514">
    <property type="term" value="F:nicotinate-nucleotide diphosphorylase (carboxylating) activity"/>
    <property type="evidence" value="ECO:0000318"/>
    <property type="project" value="GO_Central"/>
</dbReference>
<dbReference type="GO" id="GO:0009820">
    <property type="term" value="P:alkaloid metabolic process"/>
    <property type="evidence" value="ECO:0007669"/>
    <property type="project" value="UniProtKB-KW"/>
</dbReference>
<dbReference type="GO" id="GO:0009435">
    <property type="term" value="P:NAD biosynthetic process"/>
    <property type="evidence" value="ECO:0000318"/>
    <property type="project" value="GO_Central"/>
</dbReference>
<dbReference type="GO" id="GO:0042179">
    <property type="term" value="P:nicotine biosynthetic process"/>
    <property type="evidence" value="ECO:0007669"/>
    <property type="project" value="UniProtKB-UniPathway"/>
</dbReference>
<dbReference type="GO" id="GO:0034213">
    <property type="term" value="P:quinolinate catabolic process"/>
    <property type="evidence" value="ECO:0000318"/>
    <property type="project" value="GO_Central"/>
</dbReference>
<dbReference type="GO" id="GO:0009753">
    <property type="term" value="P:response to jasmonic acid"/>
    <property type="evidence" value="ECO:0000270"/>
    <property type="project" value="UniProtKB"/>
</dbReference>
<dbReference type="GO" id="GO:0009611">
    <property type="term" value="P:response to wounding"/>
    <property type="evidence" value="ECO:0000270"/>
    <property type="project" value="UniProtKB"/>
</dbReference>
<dbReference type="CDD" id="cd01572">
    <property type="entry name" value="QPRTase"/>
    <property type="match status" value="1"/>
</dbReference>
<dbReference type="FunFam" id="3.90.1170.20:FF:000001">
    <property type="entry name" value="Nicotinate-nucleotide diphosphorylase (Carboxylating)"/>
    <property type="match status" value="1"/>
</dbReference>
<dbReference type="FunFam" id="3.20.20.70:FF:000149">
    <property type="entry name" value="Nicotinate-nucleotide pyrophosphorylase [carboxylating]"/>
    <property type="match status" value="1"/>
</dbReference>
<dbReference type="Gene3D" id="3.20.20.70">
    <property type="entry name" value="Aldolase class I"/>
    <property type="match status" value="1"/>
</dbReference>
<dbReference type="Gene3D" id="3.90.1170.20">
    <property type="entry name" value="Quinolinate phosphoribosyl transferase, N-terminal domain"/>
    <property type="match status" value="1"/>
</dbReference>
<dbReference type="InterPro" id="IPR013785">
    <property type="entry name" value="Aldolase_TIM"/>
</dbReference>
<dbReference type="InterPro" id="IPR004393">
    <property type="entry name" value="NadC"/>
</dbReference>
<dbReference type="InterPro" id="IPR027277">
    <property type="entry name" value="NadC/ModD"/>
</dbReference>
<dbReference type="InterPro" id="IPR036068">
    <property type="entry name" value="Nicotinate_pribotase-like_C"/>
</dbReference>
<dbReference type="InterPro" id="IPR037128">
    <property type="entry name" value="Quinolinate_PRibosylTase_N_sf"/>
</dbReference>
<dbReference type="InterPro" id="IPR002638">
    <property type="entry name" value="Quinolinate_PRibosylTrfase_C"/>
</dbReference>
<dbReference type="InterPro" id="IPR022412">
    <property type="entry name" value="Quinolinate_PRibosylTrfase_N"/>
</dbReference>
<dbReference type="NCBIfam" id="TIGR00078">
    <property type="entry name" value="nadC"/>
    <property type="match status" value="1"/>
</dbReference>
<dbReference type="PANTHER" id="PTHR32179">
    <property type="entry name" value="NICOTINATE-NUCLEOTIDE PYROPHOSPHORYLASE [CARBOXYLATING]"/>
    <property type="match status" value="1"/>
</dbReference>
<dbReference type="PANTHER" id="PTHR32179:SF3">
    <property type="entry name" value="NICOTINATE-NUCLEOTIDE PYROPHOSPHORYLASE [CARBOXYLATING]"/>
    <property type="match status" value="1"/>
</dbReference>
<dbReference type="Pfam" id="PF01729">
    <property type="entry name" value="QRPTase_C"/>
    <property type="match status" value="1"/>
</dbReference>
<dbReference type="Pfam" id="PF02749">
    <property type="entry name" value="QRPTase_N"/>
    <property type="match status" value="1"/>
</dbReference>
<dbReference type="SUPFAM" id="SSF51690">
    <property type="entry name" value="Nicotinate/Quinolinate PRTase C-terminal domain-like"/>
    <property type="match status" value="1"/>
</dbReference>
<dbReference type="SUPFAM" id="SSF54675">
    <property type="entry name" value="Nicotinate/Quinolinate PRTase N-terminal domain-like"/>
    <property type="match status" value="1"/>
</dbReference>
<proteinExistence type="evidence at protein level"/>
<name>QPT2B_TOBAC</name>
<feature type="transit peptide" description="Mitochondrion" evidence="2">
    <location>
        <begin position="1"/>
        <end status="unknown"/>
    </location>
</feature>
<feature type="chain" id="PRO_0000455791" description="Quinolinate phosphoribosyltransferase [decarboxylating] 2b, mitochondrial">
    <location>
        <begin status="unknown"/>
        <end position="351"/>
    </location>
</feature>
<feature type="binding site" evidence="1">
    <location>
        <position position="142"/>
    </location>
    <ligand>
        <name>substrate</name>
    </ligand>
</feature>
<feature type="binding site" evidence="1">
    <location>
        <begin position="173"/>
        <end position="175"/>
    </location>
    <ligand>
        <name>substrate</name>
    </ligand>
</feature>
<feature type="binding site" evidence="1">
    <location>
        <position position="197"/>
    </location>
    <ligand>
        <name>substrate</name>
    </ligand>
</feature>
<feature type="binding site" evidence="1">
    <location>
        <position position="207"/>
    </location>
    <ligand>
        <name>substrate</name>
    </ligand>
</feature>
<feature type="binding site" evidence="1">
    <location>
        <position position="240"/>
    </location>
    <ligand>
        <name>substrate</name>
    </ligand>
</feature>
<feature type="binding site" evidence="1">
    <location>
        <position position="267"/>
    </location>
    <ligand>
        <name>substrate</name>
    </ligand>
</feature>
<feature type="binding site" evidence="1">
    <location>
        <begin position="299"/>
        <end position="301"/>
    </location>
    <ligand>
        <name>substrate</name>
    </ligand>
</feature>
<feature type="binding site" evidence="1">
    <location>
        <begin position="320"/>
        <end position="322"/>
    </location>
    <ligand>
        <name>substrate</name>
    </ligand>
</feature>
<feature type="sequence conflict" description="In Ref. 1; BAA92153." evidence="9" ref="1">
    <original>V</original>
    <variation>D</variation>
    <location>
        <position position="344"/>
    </location>
</feature>
<accession>A0A1S4CL59</accession>
<accession>Q9MB29</accession>
<sequence>MFRAIPFTATVHPYAITAPRLVVKMSAIATKNTRVESLEVKPPAHPTYDLKEVMKLALSEDAGNLGDVTCKATIPLDMESDAHFLAKEDGIIAGIALAEMIFAEVDPSLKVEWYVNDGDKVHKGLKFGKVQGNAYNIVIAERVVLNFMQRMSGIATLTKEMADAAHPAYILETRKTAPGLRLVDKWAVLIGGGKNHRMGLFDMVMIKDNHISAAGGVGKALKSVDQYLEQNKLQIGVEVETRTIEEVREVLDYASQTKTSLTRIMLDNMVVPLSNGDIDVSMLKEAVELINGRFDTEASGNVTLETVHKIGQTGVTYISSGALTHSVKALDISLKIDTELALEVGRRTKRA</sequence>
<reference key="1">
    <citation type="submission" date="2000-02" db="EMBL/GenBank/DDBJ databases">
        <title>Characterization of a cDNA encoding quinolinate phosphoribosyltransferase from Nicotiana tabacum.</title>
        <authorList>
            <person name="Kojima H."/>
        </authorList>
    </citation>
    <scope>NUCLEOTIDE SEQUENCE [MRNA]</scope>
    <source>
        <strain>cv. Bright Yellow 2</strain>
    </source>
</reference>
<reference key="2">
    <citation type="journal article" date="2014" name="Nat. Commun.">
        <title>The tobacco genome sequence and its comparison with those of tomato and potato.</title>
        <authorList>
            <person name="Sierro N."/>
            <person name="Battey J.N."/>
            <person name="Ouadi S."/>
            <person name="Bakaher N."/>
            <person name="Bovet L."/>
            <person name="Willig A."/>
            <person name="Goepfert S."/>
            <person name="Peitsch M.C."/>
            <person name="Ivanov N.V."/>
        </authorList>
    </citation>
    <scope>NUCLEOTIDE SEQUENCE [LARGE SCALE GENOMIC DNA]</scope>
    <source>
        <strain>cv. TN90</strain>
    </source>
</reference>
<reference key="3">
    <citation type="journal article" date="2007" name="Phytochemistry">
        <title>Functional characterisation of genes involved in pyridine alkaloid biosynthesis in tobacco.</title>
        <authorList>
            <person name="Haekkinen S.T."/>
            <person name="Tilleman S."/>
            <person name="Swiatek A."/>
            <person name="De Sutter V."/>
            <person name="Rischer H."/>
            <person name="Vanhoutte I."/>
            <person name="Van Onckelen H."/>
            <person name="Hilson P."/>
            <person name="Inze D."/>
            <person name="Oksman-Caldentey K.-M."/>
            <person name="Goossens A."/>
        </authorList>
    </citation>
    <scope>REVIEW</scope>
    <source>
        <tissue>Protoplast</tissue>
    </source>
</reference>
<reference key="4">
    <citation type="journal article" date="2012" name="Plant Sci.">
        <title>Structure and expression of the quinolinate phosphoribosyltransferase (QPT) gene family in Nicotiana.</title>
        <authorList>
            <person name="Ryan S.M."/>
            <person name="Cane K.A."/>
            <person name="DeBoer K.D."/>
            <person name="Sinclair S.J."/>
            <person name="Brimblecombe R."/>
            <person name="Hamill J.D."/>
        </authorList>
    </citation>
    <scope>FUNCTION</scope>
    <scope>CATALYTIC ACTIVITY</scope>
    <scope>PATHWAY</scope>
    <scope>INDUCTION BY WOUNDING AND JASMONATE</scope>
    <scope>TISSUE SPECIFICITY</scope>
    <scope>DEVELOPMENTAL STAGE</scope>
    <scope>GENE FAMILY</scope>
</reference>
<reference key="5">
    <citation type="journal article" date="2013" name="Phytochemistry">
        <title>Molecular genetics of alkaloid biosynthesis in Nicotiana tabacum.</title>
        <authorList>
            <person name="Dewey R.E."/>
            <person name="Xie J."/>
        </authorList>
    </citation>
    <scope>CATALYTIC ACTIVITY</scope>
    <scope>PATHWAY</scope>
    <scope>TISSUE SPECIFICITY</scope>
    <scope>REVIEW ON ALKALOID BIOSYNTHESIS IN NICOTIANA TABACUM</scope>
</reference>
<reference key="6">
    <citation type="journal article" date="2015" name="Mol. Genet. Genomics">
        <title>Current status and prospects for the study of Nicotiana genomics, genetics, and nicotine biosynthesis genes.</title>
        <authorList>
            <person name="Wang X."/>
            <person name="Bennetzen J.L."/>
        </authorList>
    </citation>
    <scope>CATALYTIC ACTIVITY</scope>
    <scope>PATHWAY</scope>
    <scope>REVIEW ON NICOTINE BIOSYNTHESIS</scope>
</reference>
<reference key="7">
    <citation type="journal article" date="2019" name="Food Chem. Toxicol.">
        <title>Antiparasitic properties of leaf extracts derived from selected Nicotiana species and Nicotiana tabacum varieties.</title>
        <authorList>
            <person name="Schorderet Weber S."/>
            <person name="Kaminski K.P."/>
            <person name="Perret J.-L."/>
            <person name="Leroy P."/>
            <person name="Mazurov A."/>
            <person name="Peitsch M.C."/>
            <person name="Ivanov N.V."/>
            <person name="Hoeng J."/>
        </authorList>
    </citation>
    <scope>FUNCTION</scope>
    <source>
        <strain>cv. Burley Stella</strain>
        <strain>cv. Burley TN90</strain>
        <strain>cv. Virginia ITB 683</strain>
        <strain>cv. Virginia K326</strain>
    </source>
</reference>
<protein>
    <recommendedName>
        <fullName evidence="7">Quinolinate phosphoribosyltransferase [decarboxylating] 2b, mitochondrial</fullName>
        <shortName evidence="7">NtQPT2b</shortName>
        <shortName evidence="9">QPRtase 2b</shortName>
        <ecNumber evidence="10 11 12">2.4.2.19</ecNumber>
    </recommendedName>
</protein>